<reference key="1">
    <citation type="journal article" date="2002" name="Nat. Biotechnol.">
        <title>Genome sequence of the dissimilatory metal ion-reducing bacterium Shewanella oneidensis.</title>
        <authorList>
            <person name="Heidelberg J.F."/>
            <person name="Paulsen I.T."/>
            <person name="Nelson K.E."/>
            <person name="Gaidos E.J."/>
            <person name="Nelson W.C."/>
            <person name="Read T.D."/>
            <person name="Eisen J.A."/>
            <person name="Seshadri R."/>
            <person name="Ward N.L."/>
            <person name="Methe B.A."/>
            <person name="Clayton R.A."/>
            <person name="Meyer T."/>
            <person name="Tsapin A."/>
            <person name="Scott J."/>
            <person name="Beanan M.J."/>
            <person name="Brinkac L.M."/>
            <person name="Daugherty S.C."/>
            <person name="DeBoy R.T."/>
            <person name="Dodson R.J."/>
            <person name="Durkin A.S."/>
            <person name="Haft D.H."/>
            <person name="Kolonay J.F."/>
            <person name="Madupu R."/>
            <person name="Peterson J.D."/>
            <person name="Umayam L.A."/>
            <person name="White O."/>
            <person name="Wolf A.M."/>
            <person name="Vamathevan J.J."/>
            <person name="Weidman J.F."/>
            <person name="Impraim M."/>
            <person name="Lee K."/>
            <person name="Berry K.J."/>
            <person name="Lee C."/>
            <person name="Mueller J."/>
            <person name="Khouri H.M."/>
            <person name="Gill J."/>
            <person name="Utterback T.R."/>
            <person name="McDonald L.A."/>
            <person name="Feldblyum T.V."/>
            <person name="Smith H.O."/>
            <person name="Venter J.C."/>
            <person name="Nealson K.H."/>
            <person name="Fraser C.M."/>
        </authorList>
    </citation>
    <scope>NUCLEOTIDE SEQUENCE [LARGE SCALE GENOMIC DNA]</scope>
    <source>
        <strain>ATCC 700550 / JCM 31522 / CIP 106686 / LMG 19005 / NCIMB 14063 / MR-1</strain>
    </source>
</reference>
<dbReference type="EC" id="7.1.2.2" evidence="1"/>
<dbReference type="EMBL" id="AE014299">
    <property type="protein sequence ID" value="AAN57708.1"/>
    <property type="molecule type" value="Genomic_DNA"/>
</dbReference>
<dbReference type="RefSeq" id="NP_720265.1">
    <property type="nucleotide sequence ID" value="NC_004347.2"/>
</dbReference>
<dbReference type="RefSeq" id="WP_011074332.1">
    <property type="nucleotide sequence ID" value="NZ_CP053946.1"/>
</dbReference>
<dbReference type="SMR" id="Q8E8B8"/>
<dbReference type="STRING" id="211586.SO_4749"/>
<dbReference type="PaxDb" id="211586-SO_4749"/>
<dbReference type="KEGG" id="son:SO_4749"/>
<dbReference type="PATRIC" id="fig|211586.12.peg.4606"/>
<dbReference type="eggNOG" id="COG0056">
    <property type="taxonomic scope" value="Bacteria"/>
</dbReference>
<dbReference type="HOGENOM" id="CLU_010091_2_1_6"/>
<dbReference type="OrthoDB" id="9803053at2"/>
<dbReference type="PhylomeDB" id="Q8E8B8"/>
<dbReference type="BioCyc" id="SONE211586:G1GMP-4394-MONOMER"/>
<dbReference type="Proteomes" id="UP000008186">
    <property type="component" value="Chromosome"/>
</dbReference>
<dbReference type="GO" id="GO:0005886">
    <property type="term" value="C:plasma membrane"/>
    <property type="evidence" value="ECO:0007669"/>
    <property type="project" value="UniProtKB-SubCell"/>
</dbReference>
<dbReference type="GO" id="GO:0045259">
    <property type="term" value="C:proton-transporting ATP synthase complex"/>
    <property type="evidence" value="ECO:0007669"/>
    <property type="project" value="UniProtKB-KW"/>
</dbReference>
<dbReference type="GO" id="GO:0043531">
    <property type="term" value="F:ADP binding"/>
    <property type="evidence" value="ECO:0000318"/>
    <property type="project" value="GO_Central"/>
</dbReference>
<dbReference type="GO" id="GO:0005524">
    <property type="term" value="F:ATP binding"/>
    <property type="evidence" value="ECO:0000318"/>
    <property type="project" value="GO_Central"/>
</dbReference>
<dbReference type="GO" id="GO:0046933">
    <property type="term" value="F:proton-transporting ATP synthase activity, rotational mechanism"/>
    <property type="evidence" value="ECO:0007669"/>
    <property type="project" value="UniProtKB-UniRule"/>
</dbReference>
<dbReference type="GO" id="GO:0015986">
    <property type="term" value="P:proton motive force-driven ATP synthesis"/>
    <property type="evidence" value="ECO:0000318"/>
    <property type="project" value="GO_Central"/>
</dbReference>
<dbReference type="CDD" id="cd18113">
    <property type="entry name" value="ATP-synt_F1_alpha_C"/>
    <property type="match status" value="1"/>
</dbReference>
<dbReference type="CDD" id="cd18116">
    <property type="entry name" value="ATP-synt_F1_alpha_N"/>
    <property type="match status" value="1"/>
</dbReference>
<dbReference type="CDD" id="cd01132">
    <property type="entry name" value="F1-ATPase_alpha_CD"/>
    <property type="match status" value="1"/>
</dbReference>
<dbReference type="FunFam" id="1.20.150.20:FF:000001">
    <property type="entry name" value="ATP synthase subunit alpha"/>
    <property type="match status" value="1"/>
</dbReference>
<dbReference type="FunFam" id="2.40.30.20:FF:000001">
    <property type="entry name" value="ATP synthase subunit alpha"/>
    <property type="match status" value="1"/>
</dbReference>
<dbReference type="FunFam" id="3.40.50.300:FF:000002">
    <property type="entry name" value="ATP synthase subunit alpha"/>
    <property type="match status" value="1"/>
</dbReference>
<dbReference type="Gene3D" id="2.40.30.20">
    <property type="match status" value="1"/>
</dbReference>
<dbReference type="Gene3D" id="1.20.150.20">
    <property type="entry name" value="ATP synthase alpha/beta chain, C-terminal domain"/>
    <property type="match status" value="1"/>
</dbReference>
<dbReference type="Gene3D" id="3.40.50.300">
    <property type="entry name" value="P-loop containing nucleotide triphosphate hydrolases"/>
    <property type="match status" value="1"/>
</dbReference>
<dbReference type="HAMAP" id="MF_01346">
    <property type="entry name" value="ATP_synth_alpha_bact"/>
    <property type="match status" value="1"/>
</dbReference>
<dbReference type="InterPro" id="IPR023366">
    <property type="entry name" value="ATP_synth_asu-like_sf"/>
</dbReference>
<dbReference type="InterPro" id="IPR000793">
    <property type="entry name" value="ATP_synth_asu_C"/>
</dbReference>
<dbReference type="InterPro" id="IPR038376">
    <property type="entry name" value="ATP_synth_asu_C_sf"/>
</dbReference>
<dbReference type="InterPro" id="IPR033732">
    <property type="entry name" value="ATP_synth_F1_a_nt-bd_dom"/>
</dbReference>
<dbReference type="InterPro" id="IPR005294">
    <property type="entry name" value="ATP_synth_F1_asu"/>
</dbReference>
<dbReference type="InterPro" id="IPR020003">
    <property type="entry name" value="ATPase_a/bsu_AS"/>
</dbReference>
<dbReference type="InterPro" id="IPR004100">
    <property type="entry name" value="ATPase_F1/V1/A1_a/bsu_N"/>
</dbReference>
<dbReference type="InterPro" id="IPR036121">
    <property type="entry name" value="ATPase_F1/V1/A1_a/bsu_N_sf"/>
</dbReference>
<dbReference type="InterPro" id="IPR000194">
    <property type="entry name" value="ATPase_F1/V1/A1_a/bsu_nucl-bd"/>
</dbReference>
<dbReference type="InterPro" id="IPR027417">
    <property type="entry name" value="P-loop_NTPase"/>
</dbReference>
<dbReference type="NCBIfam" id="TIGR00962">
    <property type="entry name" value="atpA"/>
    <property type="match status" value="1"/>
</dbReference>
<dbReference type="NCBIfam" id="NF009884">
    <property type="entry name" value="PRK13343.1"/>
    <property type="match status" value="1"/>
</dbReference>
<dbReference type="PANTHER" id="PTHR48082">
    <property type="entry name" value="ATP SYNTHASE SUBUNIT ALPHA, MITOCHONDRIAL"/>
    <property type="match status" value="1"/>
</dbReference>
<dbReference type="PANTHER" id="PTHR48082:SF2">
    <property type="entry name" value="ATP SYNTHASE SUBUNIT ALPHA, MITOCHONDRIAL"/>
    <property type="match status" value="1"/>
</dbReference>
<dbReference type="Pfam" id="PF00006">
    <property type="entry name" value="ATP-synt_ab"/>
    <property type="match status" value="1"/>
</dbReference>
<dbReference type="Pfam" id="PF00306">
    <property type="entry name" value="ATP-synt_ab_C"/>
    <property type="match status" value="1"/>
</dbReference>
<dbReference type="Pfam" id="PF02874">
    <property type="entry name" value="ATP-synt_ab_N"/>
    <property type="match status" value="1"/>
</dbReference>
<dbReference type="SUPFAM" id="SSF47917">
    <property type="entry name" value="C-terminal domain of alpha and beta subunits of F1 ATP synthase"/>
    <property type="match status" value="1"/>
</dbReference>
<dbReference type="SUPFAM" id="SSF50615">
    <property type="entry name" value="N-terminal domain of alpha and beta subunits of F1 ATP synthase"/>
    <property type="match status" value="1"/>
</dbReference>
<dbReference type="SUPFAM" id="SSF52540">
    <property type="entry name" value="P-loop containing nucleoside triphosphate hydrolases"/>
    <property type="match status" value="1"/>
</dbReference>
<dbReference type="PROSITE" id="PS00152">
    <property type="entry name" value="ATPASE_ALPHA_BETA"/>
    <property type="match status" value="1"/>
</dbReference>
<sequence>MQLNSTEISDLIKQRIEQFEVVSESRNEGTIVAVSDGIIRIHGLADVMQGEMIELPGSRFAIALNLERDSVGAVVMGPYADLAEGVKVKTTGRILEVPVGRGLLGRVVNTLGEPIDGKGAIDNDGFSPVEVIAPGVIERKSVDQPVQTGYKAVDAMIPIGRGQRELIIGDRQTGKTAMAIDAIINQRDSGIKCVYVAVGQKASTIANVVRKLEEHGALANTIVVVATASEAAALQYLAPYSGCAMGEYFRDRGEDALIVYDDLSKQAVAYRQISLLLKRPPGREAYPGDVFYLHSRLLERASRVNEEYVEKFTKGAVTGKTGSLTALPIIETQAGDVSAFVPTNVISITDGQIFLETDLFNSGLRPAVNPGISVSRVGGAAQTKIIKKLSGGIRTALAQYRELAAFSQFASDLDDATRAQLEHGVRVTELMKQKQYAPMSVAAQAVSIFAAEKGYLKGVELKKVGDFEAALLSYMNSEHAALIKLINETGDYNADIEAELKAGLDKFVATQTW</sequence>
<gene>
    <name evidence="1" type="primary">atpA</name>
    <name type="ordered locus">SO_4749</name>
</gene>
<evidence type="ECO:0000255" key="1">
    <source>
        <dbReference type="HAMAP-Rule" id="MF_01346"/>
    </source>
</evidence>
<accession>Q8E8B8</accession>
<name>ATPA_SHEON</name>
<organism>
    <name type="scientific">Shewanella oneidensis (strain ATCC 700550 / JCM 31522 / CIP 106686 / LMG 19005 / NCIMB 14063 / MR-1)</name>
    <dbReference type="NCBI Taxonomy" id="211586"/>
    <lineage>
        <taxon>Bacteria</taxon>
        <taxon>Pseudomonadati</taxon>
        <taxon>Pseudomonadota</taxon>
        <taxon>Gammaproteobacteria</taxon>
        <taxon>Alteromonadales</taxon>
        <taxon>Shewanellaceae</taxon>
        <taxon>Shewanella</taxon>
    </lineage>
</organism>
<protein>
    <recommendedName>
        <fullName evidence="1">ATP synthase subunit alpha</fullName>
        <ecNumber evidence="1">7.1.2.2</ecNumber>
    </recommendedName>
    <alternativeName>
        <fullName evidence="1">ATP synthase F1 sector subunit alpha</fullName>
    </alternativeName>
    <alternativeName>
        <fullName evidence="1">F-ATPase subunit alpha</fullName>
    </alternativeName>
</protein>
<comment type="function">
    <text evidence="1">Produces ATP from ADP in the presence of a proton gradient across the membrane. The alpha chain is a regulatory subunit.</text>
</comment>
<comment type="catalytic activity">
    <reaction evidence="1">
        <text>ATP + H2O + 4 H(+)(in) = ADP + phosphate + 5 H(+)(out)</text>
        <dbReference type="Rhea" id="RHEA:57720"/>
        <dbReference type="ChEBI" id="CHEBI:15377"/>
        <dbReference type="ChEBI" id="CHEBI:15378"/>
        <dbReference type="ChEBI" id="CHEBI:30616"/>
        <dbReference type="ChEBI" id="CHEBI:43474"/>
        <dbReference type="ChEBI" id="CHEBI:456216"/>
        <dbReference type="EC" id="7.1.2.2"/>
    </reaction>
</comment>
<comment type="subunit">
    <text evidence="1">F-type ATPases have 2 components, CF(1) - the catalytic core - and CF(0) - the membrane proton channel. CF(1) has five subunits: alpha(3), beta(3), gamma(1), delta(1), epsilon(1). CF(0) has three main subunits: a(1), b(2) and c(9-12). The alpha and beta chains form an alternating ring which encloses part of the gamma chain. CF(1) is attached to CF(0) by a central stalk formed by the gamma and epsilon chains, while a peripheral stalk is formed by the delta and b chains.</text>
</comment>
<comment type="subcellular location">
    <subcellularLocation>
        <location evidence="1">Cell inner membrane</location>
        <topology evidence="1">Peripheral membrane protein</topology>
    </subcellularLocation>
</comment>
<comment type="similarity">
    <text evidence="1">Belongs to the ATPase alpha/beta chains family.</text>
</comment>
<keyword id="KW-0066">ATP synthesis</keyword>
<keyword id="KW-0067">ATP-binding</keyword>
<keyword id="KW-0997">Cell inner membrane</keyword>
<keyword id="KW-1003">Cell membrane</keyword>
<keyword id="KW-0139">CF(1)</keyword>
<keyword id="KW-0375">Hydrogen ion transport</keyword>
<keyword id="KW-0406">Ion transport</keyword>
<keyword id="KW-0472">Membrane</keyword>
<keyword id="KW-0547">Nucleotide-binding</keyword>
<keyword id="KW-1185">Reference proteome</keyword>
<keyword id="KW-1278">Translocase</keyword>
<keyword id="KW-0813">Transport</keyword>
<proteinExistence type="inferred from homology"/>
<feature type="chain" id="PRO_0000238351" description="ATP synthase subunit alpha">
    <location>
        <begin position="1"/>
        <end position="513"/>
    </location>
</feature>
<feature type="binding site" evidence="1">
    <location>
        <begin position="169"/>
        <end position="176"/>
    </location>
    <ligand>
        <name>ATP</name>
        <dbReference type="ChEBI" id="CHEBI:30616"/>
    </ligand>
</feature>
<feature type="site" description="Required for activity" evidence="1">
    <location>
        <position position="373"/>
    </location>
</feature>